<gene>
    <name evidence="1" type="primary">fmt</name>
    <name type="ordered locus">EF_3123</name>
</gene>
<protein>
    <recommendedName>
        <fullName evidence="1">Methionyl-tRNA formyltransferase</fullName>
        <ecNumber evidence="1">2.1.2.9</ecNumber>
    </recommendedName>
</protein>
<sequence>MTKIVFMGTPAFSVPILESLIEAGYDVQAVVTQPDRPVGRKKVITPTPVKEAALKHNLLVLQPEKISGSPEMEKVIDLAPDLIVTAAFGQFLPEKILKAPKLGAINVHASLLPKYRGGAPVHYSIIEGEKETGVTIMEMVKKMDAGAILSQRAIPITKQDDVGTMFEKLSILGKELLLETLPKLIAGEITPIPQVEEEATFSPNITREQERIDWQKTAEAIDNQVRGMRPWPTAFTTYQGTNWKIWAVTPLTETTTSAPGTIIQRSKKALWIACGEGTVLQIDRLQPAGKGQLTIQEFLNGVGQNVAEKDKVD</sequence>
<keyword id="KW-0648">Protein biosynthesis</keyword>
<keyword id="KW-1185">Reference proteome</keyword>
<keyword id="KW-0808">Transferase</keyword>
<organism>
    <name type="scientific">Enterococcus faecalis (strain ATCC 700802 / V583)</name>
    <dbReference type="NCBI Taxonomy" id="226185"/>
    <lineage>
        <taxon>Bacteria</taxon>
        <taxon>Bacillati</taxon>
        <taxon>Bacillota</taxon>
        <taxon>Bacilli</taxon>
        <taxon>Lactobacillales</taxon>
        <taxon>Enterococcaceae</taxon>
        <taxon>Enterococcus</taxon>
    </lineage>
</organism>
<comment type="function">
    <text evidence="1">Attaches a formyl group to the free amino group of methionyl-tRNA(fMet). The formyl group appears to play a dual role in the initiator identity of N-formylmethionyl-tRNA by promoting its recognition by IF2 and preventing the misappropriation of this tRNA by the elongation apparatus.</text>
</comment>
<comment type="catalytic activity">
    <reaction evidence="1">
        <text>L-methionyl-tRNA(fMet) + (6R)-10-formyltetrahydrofolate = N-formyl-L-methionyl-tRNA(fMet) + (6S)-5,6,7,8-tetrahydrofolate + H(+)</text>
        <dbReference type="Rhea" id="RHEA:24380"/>
        <dbReference type="Rhea" id="RHEA-COMP:9952"/>
        <dbReference type="Rhea" id="RHEA-COMP:9953"/>
        <dbReference type="ChEBI" id="CHEBI:15378"/>
        <dbReference type="ChEBI" id="CHEBI:57453"/>
        <dbReference type="ChEBI" id="CHEBI:78530"/>
        <dbReference type="ChEBI" id="CHEBI:78844"/>
        <dbReference type="ChEBI" id="CHEBI:195366"/>
        <dbReference type="EC" id="2.1.2.9"/>
    </reaction>
</comment>
<comment type="similarity">
    <text evidence="1">Belongs to the Fmt family.</text>
</comment>
<proteinExistence type="inferred from homology"/>
<accession>Q82ZD8</accession>
<name>FMT_ENTFA</name>
<evidence type="ECO:0000255" key="1">
    <source>
        <dbReference type="HAMAP-Rule" id="MF_00182"/>
    </source>
</evidence>
<reference key="1">
    <citation type="journal article" date="2003" name="Science">
        <title>Role of mobile DNA in the evolution of vancomycin-resistant Enterococcus faecalis.</title>
        <authorList>
            <person name="Paulsen I.T."/>
            <person name="Banerjei L."/>
            <person name="Myers G.S.A."/>
            <person name="Nelson K.E."/>
            <person name="Seshadri R."/>
            <person name="Read T.D."/>
            <person name="Fouts D.E."/>
            <person name="Eisen J.A."/>
            <person name="Gill S.R."/>
            <person name="Heidelberg J.F."/>
            <person name="Tettelin H."/>
            <person name="Dodson R.J."/>
            <person name="Umayam L.A."/>
            <person name="Brinkac L.M."/>
            <person name="Beanan M.J."/>
            <person name="Daugherty S.C."/>
            <person name="DeBoy R.T."/>
            <person name="Durkin S.A."/>
            <person name="Kolonay J.F."/>
            <person name="Madupu R."/>
            <person name="Nelson W.C."/>
            <person name="Vamathevan J.J."/>
            <person name="Tran B."/>
            <person name="Upton J."/>
            <person name="Hansen T."/>
            <person name="Shetty J."/>
            <person name="Khouri H.M."/>
            <person name="Utterback T.R."/>
            <person name="Radune D."/>
            <person name="Ketchum K.A."/>
            <person name="Dougherty B.A."/>
            <person name="Fraser C.M."/>
        </authorList>
    </citation>
    <scope>NUCLEOTIDE SEQUENCE [LARGE SCALE GENOMIC DNA]</scope>
    <source>
        <strain>ATCC 700802 / V583</strain>
    </source>
</reference>
<feature type="chain" id="PRO_0000082964" description="Methionyl-tRNA formyltransferase">
    <location>
        <begin position="1"/>
        <end position="313"/>
    </location>
</feature>
<feature type="binding site" evidence="1">
    <location>
        <begin position="110"/>
        <end position="113"/>
    </location>
    <ligand>
        <name>(6S)-5,6,7,8-tetrahydrofolate</name>
        <dbReference type="ChEBI" id="CHEBI:57453"/>
    </ligand>
</feature>
<dbReference type="EC" id="2.1.2.9" evidence="1"/>
<dbReference type="EMBL" id="AE016830">
    <property type="protein sequence ID" value="AAO82803.1"/>
    <property type="molecule type" value="Genomic_DNA"/>
</dbReference>
<dbReference type="RefSeq" id="NP_816733.1">
    <property type="nucleotide sequence ID" value="NC_004668.1"/>
</dbReference>
<dbReference type="RefSeq" id="WP_002365369.1">
    <property type="nucleotide sequence ID" value="NZ_KE136524.1"/>
</dbReference>
<dbReference type="SMR" id="Q82ZD8"/>
<dbReference type="STRING" id="226185.EF_3123"/>
<dbReference type="EnsemblBacteria" id="AAO82803">
    <property type="protein sequence ID" value="AAO82803"/>
    <property type="gene ID" value="EF_3123"/>
</dbReference>
<dbReference type="KEGG" id="efa:EF3123"/>
<dbReference type="PATRIC" id="fig|226185.45.peg.450"/>
<dbReference type="eggNOG" id="COG0223">
    <property type="taxonomic scope" value="Bacteria"/>
</dbReference>
<dbReference type="HOGENOM" id="CLU_033347_1_1_9"/>
<dbReference type="SABIO-RK" id="Q82ZD8"/>
<dbReference type="Proteomes" id="UP000001415">
    <property type="component" value="Chromosome"/>
</dbReference>
<dbReference type="GO" id="GO:0005829">
    <property type="term" value="C:cytosol"/>
    <property type="evidence" value="ECO:0007669"/>
    <property type="project" value="TreeGrafter"/>
</dbReference>
<dbReference type="GO" id="GO:0004479">
    <property type="term" value="F:methionyl-tRNA formyltransferase activity"/>
    <property type="evidence" value="ECO:0007669"/>
    <property type="project" value="UniProtKB-UniRule"/>
</dbReference>
<dbReference type="CDD" id="cd08646">
    <property type="entry name" value="FMT_core_Met-tRNA-FMT_N"/>
    <property type="match status" value="1"/>
</dbReference>
<dbReference type="CDD" id="cd08704">
    <property type="entry name" value="Met_tRNA_FMT_C"/>
    <property type="match status" value="1"/>
</dbReference>
<dbReference type="FunFam" id="3.40.50.12230:FF:000001">
    <property type="entry name" value="Methionyl-tRNA formyltransferase"/>
    <property type="match status" value="1"/>
</dbReference>
<dbReference type="FunFam" id="3.40.50.170:FF:000004">
    <property type="entry name" value="Methionyl-tRNA formyltransferase"/>
    <property type="match status" value="1"/>
</dbReference>
<dbReference type="Gene3D" id="3.40.50.12230">
    <property type="match status" value="1"/>
</dbReference>
<dbReference type="HAMAP" id="MF_00182">
    <property type="entry name" value="Formyl_trans"/>
    <property type="match status" value="1"/>
</dbReference>
<dbReference type="InterPro" id="IPR005794">
    <property type="entry name" value="Fmt"/>
</dbReference>
<dbReference type="InterPro" id="IPR005793">
    <property type="entry name" value="Formyl_trans_C"/>
</dbReference>
<dbReference type="InterPro" id="IPR002376">
    <property type="entry name" value="Formyl_transf_N"/>
</dbReference>
<dbReference type="InterPro" id="IPR036477">
    <property type="entry name" value="Formyl_transf_N_sf"/>
</dbReference>
<dbReference type="InterPro" id="IPR011034">
    <property type="entry name" value="Formyl_transferase-like_C_sf"/>
</dbReference>
<dbReference type="InterPro" id="IPR001555">
    <property type="entry name" value="GART_AS"/>
</dbReference>
<dbReference type="InterPro" id="IPR044135">
    <property type="entry name" value="Met-tRNA-FMT_C"/>
</dbReference>
<dbReference type="InterPro" id="IPR041711">
    <property type="entry name" value="Met-tRNA-FMT_N"/>
</dbReference>
<dbReference type="NCBIfam" id="TIGR00460">
    <property type="entry name" value="fmt"/>
    <property type="match status" value="1"/>
</dbReference>
<dbReference type="PANTHER" id="PTHR11138">
    <property type="entry name" value="METHIONYL-TRNA FORMYLTRANSFERASE"/>
    <property type="match status" value="1"/>
</dbReference>
<dbReference type="PANTHER" id="PTHR11138:SF5">
    <property type="entry name" value="METHIONYL-TRNA FORMYLTRANSFERASE, MITOCHONDRIAL"/>
    <property type="match status" value="1"/>
</dbReference>
<dbReference type="Pfam" id="PF02911">
    <property type="entry name" value="Formyl_trans_C"/>
    <property type="match status" value="1"/>
</dbReference>
<dbReference type="Pfam" id="PF00551">
    <property type="entry name" value="Formyl_trans_N"/>
    <property type="match status" value="1"/>
</dbReference>
<dbReference type="SUPFAM" id="SSF50486">
    <property type="entry name" value="FMT C-terminal domain-like"/>
    <property type="match status" value="1"/>
</dbReference>
<dbReference type="SUPFAM" id="SSF53328">
    <property type="entry name" value="Formyltransferase"/>
    <property type="match status" value="1"/>
</dbReference>
<dbReference type="PROSITE" id="PS00373">
    <property type="entry name" value="GART"/>
    <property type="match status" value="1"/>
</dbReference>